<reference key="1">
    <citation type="journal article" date="2003" name="Plant Mol. Biol.">
        <title>Molecular characterization of a novel senescence-associated gene SPA15 induced during leaf senescence in sweet potato.</title>
        <authorList>
            <person name="Yap M.N."/>
            <person name="Lee R.H."/>
            <person name="Huang Y.J."/>
            <person name="Liao C.J."/>
            <person name="Chen S.C."/>
        </authorList>
    </citation>
    <scope>NUCLEOTIDE SEQUENCE [MRNA]</scope>
    <scope>TISSUE SPECIFICITY</scope>
    <scope>DEVELOPMENTAL STAGE</scope>
    <source>
        <strain>cv. Tainung 67</strain>
        <tissue>Leaf</tissue>
    </source>
</reference>
<reference key="2">
    <citation type="submission" date="2003-11" db="EMBL/GenBank/DDBJ databases">
        <title>A DNA sequence of premature senescence-associated gene (PSAG) in rice.</title>
        <authorList>
            <person name="Li F."/>
            <person name="Sun Z."/>
            <person name="Zhang H."/>
            <person name="Liu J."/>
            <person name="Fu Y."/>
            <person name="Hu G."/>
            <person name="Yu Y."/>
        </authorList>
    </citation>
    <scope>NUCLEOTIDE SEQUENCE [GENOMIC DNA / MRNA]</scope>
    <source>
        <strain>cv. Zhonghua 11</strain>
    </source>
</reference>
<reference key="3">
    <citation type="journal article" date="2005" name="Mol. Genet. Genomics">
        <title>A fine physical map of the rice chromosome 5.</title>
        <authorList>
            <person name="Cheng C.-H."/>
            <person name="Chung M.C."/>
            <person name="Liu S.-M."/>
            <person name="Chen S.-K."/>
            <person name="Kao F.Y."/>
            <person name="Lin S.-J."/>
            <person name="Hsiao S.-H."/>
            <person name="Tseng I.C."/>
            <person name="Hsing Y.-I.C."/>
            <person name="Wu H.-P."/>
            <person name="Chen C.-S."/>
            <person name="Shaw J.-F."/>
            <person name="Wu J."/>
            <person name="Matsumoto T."/>
            <person name="Sasaki T."/>
            <person name="Chen H.-C."/>
            <person name="Chow T.-Y."/>
        </authorList>
    </citation>
    <scope>NUCLEOTIDE SEQUENCE [LARGE SCALE GENOMIC DNA]</scope>
    <source>
        <strain>cv. Nipponbare</strain>
    </source>
</reference>
<reference key="4">
    <citation type="journal article" date="2005" name="Nature">
        <title>The map-based sequence of the rice genome.</title>
        <authorList>
            <consortium name="International rice genome sequencing project (IRGSP)"/>
        </authorList>
    </citation>
    <scope>NUCLEOTIDE SEQUENCE [LARGE SCALE GENOMIC DNA]</scope>
    <source>
        <strain>cv. Nipponbare</strain>
    </source>
</reference>
<reference key="5">
    <citation type="journal article" date="2008" name="Nucleic Acids Res.">
        <title>The rice annotation project database (RAP-DB): 2008 update.</title>
        <authorList>
            <consortium name="The rice annotation project (RAP)"/>
        </authorList>
    </citation>
    <scope>GENOME REANNOTATION</scope>
    <source>
        <strain>cv. Nipponbare</strain>
    </source>
</reference>
<reference key="6">
    <citation type="journal article" date="2013" name="Rice">
        <title>Improvement of the Oryza sativa Nipponbare reference genome using next generation sequence and optical map data.</title>
        <authorList>
            <person name="Kawahara Y."/>
            <person name="de la Bastide M."/>
            <person name="Hamilton J.P."/>
            <person name="Kanamori H."/>
            <person name="McCombie W.R."/>
            <person name="Ouyang S."/>
            <person name="Schwartz D.C."/>
            <person name="Tanaka T."/>
            <person name="Wu J."/>
            <person name="Zhou S."/>
            <person name="Childs K.L."/>
            <person name="Davidson R.M."/>
            <person name="Lin H."/>
            <person name="Quesada-Ocampo L."/>
            <person name="Vaillancourt B."/>
            <person name="Sakai H."/>
            <person name="Lee S.S."/>
            <person name="Kim J."/>
            <person name="Numa H."/>
            <person name="Itoh T."/>
            <person name="Buell C.R."/>
            <person name="Matsumoto T."/>
        </authorList>
    </citation>
    <scope>GENOME REANNOTATION</scope>
    <source>
        <strain>cv. Nipponbare</strain>
    </source>
</reference>
<reference key="7">
    <citation type="journal article" date="2005" name="PLoS Biol.">
        <title>The genomes of Oryza sativa: a history of duplications.</title>
        <authorList>
            <person name="Yu J."/>
            <person name="Wang J."/>
            <person name="Lin W."/>
            <person name="Li S."/>
            <person name="Li H."/>
            <person name="Zhou J."/>
            <person name="Ni P."/>
            <person name="Dong W."/>
            <person name="Hu S."/>
            <person name="Zeng C."/>
            <person name="Zhang J."/>
            <person name="Zhang Y."/>
            <person name="Li R."/>
            <person name="Xu Z."/>
            <person name="Li S."/>
            <person name="Li X."/>
            <person name="Zheng H."/>
            <person name="Cong L."/>
            <person name="Lin L."/>
            <person name="Yin J."/>
            <person name="Geng J."/>
            <person name="Li G."/>
            <person name="Shi J."/>
            <person name="Liu J."/>
            <person name="Lv H."/>
            <person name="Li J."/>
            <person name="Wang J."/>
            <person name="Deng Y."/>
            <person name="Ran L."/>
            <person name="Shi X."/>
            <person name="Wang X."/>
            <person name="Wu Q."/>
            <person name="Li C."/>
            <person name="Ren X."/>
            <person name="Wang J."/>
            <person name="Wang X."/>
            <person name="Li D."/>
            <person name="Liu D."/>
            <person name="Zhang X."/>
            <person name="Ji Z."/>
            <person name="Zhao W."/>
            <person name="Sun Y."/>
            <person name="Zhang Z."/>
            <person name="Bao J."/>
            <person name="Han Y."/>
            <person name="Dong L."/>
            <person name="Ji J."/>
            <person name="Chen P."/>
            <person name="Wu S."/>
            <person name="Liu J."/>
            <person name="Xiao Y."/>
            <person name="Bu D."/>
            <person name="Tan J."/>
            <person name="Yang L."/>
            <person name="Ye C."/>
            <person name="Zhang J."/>
            <person name="Xu J."/>
            <person name="Zhou Y."/>
            <person name="Yu Y."/>
            <person name="Zhang B."/>
            <person name="Zhuang S."/>
            <person name="Wei H."/>
            <person name="Liu B."/>
            <person name="Lei M."/>
            <person name="Yu H."/>
            <person name="Li Y."/>
            <person name="Xu H."/>
            <person name="Wei S."/>
            <person name="He X."/>
            <person name="Fang L."/>
            <person name="Zhang Z."/>
            <person name="Zhang Y."/>
            <person name="Huang X."/>
            <person name="Su Z."/>
            <person name="Tong W."/>
            <person name="Li J."/>
            <person name="Tong Z."/>
            <person name="Li S."/>
            <person name="Ye J."/>
            <person name="Wang L."/>
            <person name="Fang L."/>
            <person name="Lei T."/>
            <person name="Chen C.-S."/>
            <person name="Chen H.-C."/>
            <person name="Xu Z."/>
            <person name="Li H."/>
            <person name="Huang H."/>
            <person name="Zhang F."/>
            <person name="Xu H."/>
            <person name="Li N."/>
            <person name="Zhao C."/>
            <person name="Li S."/>
            <person name="Dong L."/>
            <person name="Huang Y."/>
            <person name="Li L."/>
            <person name="Xi Y."/>
            <person name="Qi Q."/>
            <person name="Li W."/>
            <person name="Zhang B."/>
            <person name="Hu W."/>
            <person name="Zhang Y."/>
            <person name="Tian X."/>
            <person name="Jiao Y."/>
            <person name="Liang X."/>
            <person name="Jin J."/>
            <person name="Gao L."/>
            <person name="Zheng W."/>
            <person name="Hao B."/>
            <person name="Liu S.-M."/>
            <person name="Wang W."/>
            <person name="Yuan L."/>
            <person name="Cao M."/>
            <person name="McDermott J."/>
            <person name="Samudrala R."/>
            <person name="Wang J."/>
            <person name="Wong G.K.-S."/>
            <person name="Yang H."/>
        </authorList>
    </citation>
    <scope>NUCLEOTIDE SEQUENCE [LARGE SCALE GENOMIC DNA]</scope>
    <source>
        <strain>cv. Nipponbare</strain>
    </source>
</reference>
<reference key="8">
    <citation type="journal article" date="2003" name="Science">
        <title>Collection, mapping, and annotation of over 28,000 cDNA clones from japonica rice.</title>
        <authorList>
            <consortium name="The rice full-length cDNA consortium"/>
        </authorList>
    </citation>
    <scope>NUCLEOTIDE SEQUENCE [LARGE SCALE MRNA]</scope>
    <source>
        <strain>cv. Nipponbare</strain>
    </source>
</reference>
<organism>
    <name type="scientific">Oryza sativa subsp. japonica</name>
    <name type="common">Rice</name>
    <dbReference type="NCBI Taxonomy" id="39947"/>
    <lineage>
        <taxon>Eukaryota</taxon>
        <taxon>Viridiplantae</taxon>
        <taxon>Streptophyta</taxon>
        <taxon>Embryophyta</taxon>
        <taxon>Tracheophyta</taxon>
        <taxon>Spermatophyta</taxon>
        <taxon>Magnoliopsida</taxon>
        <taxon>Liliopsida</taxon>
        <taxon>Poales</taxon>
        <taxon>Poaceae</taxon>
        <taxon>BOP clade</taxon>
        <taxon>Oryzoideae</taxon>
        <taxon>Oryzeae</taxon>
        <taxon>Oryzinae</taxon>
        <taxon>Oryza</taxon>
        <taxon>Oryza sativa</taxon>
    </lineage>
</organism>
<sequence length="457" mass="50548">MATRIPGTVAASGVYYNDQYRMPCKLKGIHCMALNCIPQKAKVRKCMNGYQSTFRFCVNEKNGQTTGQSNGSLIQQGQNFRCHSYGSHNSSETKECSLEDGTDSYRDFEEHSRGASQFSDNQVAAKKKSVKSSQGLAEACKFVYNDAKFVNERAQNDILLLSRGITRLNKRACQDVAVLGSGFLKLDARARKDTKKIDHSVKERAARLTHFARILKEQAQSDLKKAADQHWSDGALEADLRRADSVVRRRAMEDAFMALKFVRDIHDMMANRLQEQFAKDGSSSPANSRSFITLEKNGNTFELFPHEVSTDQITAIEQAYWSMASALSEADGIDYTDPEELELLVATLIDLDAMDGKKSVSLLAECSSSPDVNTRKALANALAAAPSMWILGNAGMGALQRLAQDSNYAVARAATRAINELTKQWELEEGDSLRFVLNQNMVSKETADDSAAADDTR</sequence>
<feature type="transit peptide" description="Chloroplast" evidence="2">
    <location>
        <begin position="1"/>
        <end position="57"/>
    </location>
</feature>
<feature type="chain" id="PRO_0000443065" description="Senescence-associated protein OSA15, chloroplastic">
    <location>
        <begin position="58"/>
        <end position="457"/>
    </location>
</feature>
<feature type="sequence conflict" description="In Ref. 1; AAK59984." evidence="5" ref="1">
    <original>M</original>
    <variation>V</variation>
    <location>
        <position position="252"/>
    </location>
</feature>
<proteinExistence type="evidence at protein level"/>
<comment type="function">
    <text evidence="1">May be involved in the regulation of leaf senescence.</text>
</comment>
<comment type="subcellular location">
    <subcellularLocation>
        <location evidence="2">Plastid</location>
        <location evidence="2">Chloroplast</location>
    </subcellularLocation>
</comment>
<comment type="tissue specificity">
    <text evidence="3">Expressed in leaves (at protein level).</text>
</comment>
<comment type="developmental stage">
    <text evidence="3">Up-regulated during leaf senescence (at protein level).</text>
</comment>
<comment type="similarity">
    <text>Belongs to the ATA15/OSA15 family.</text>
</comment>
<name>OSA15_ORYSJ</name>
<keyword id="KW-0150">Chloroplast</keyword>
<keyword id="KW-0934">Plastid</keyword>
<keyword id="KW-1185">Reference proteome</keyword>
<keyword id="KW-0809">Transit peptide</keyword>
<protein>
    <recommendedName>
        <fullName evidence="5">Senescence-associated protein OSA15, chloroplastic</fullName>
    </recommendedName>
</protein>
<accession>Q65XF2</accession>
<accession>Q5JCT1</accession>
<gene>
    <name evidence="4" type="primary">OSA15</name>
    <name evidence="6" type="synonym">PSAG</name>
    <name evidence="8" type="ordered locus">Os05g0148700</name>
    <name evidence="5" type="ordered locus">LOC_Os05g05600</name>
    <name evidence="7" type="ORF">OJ1504_G04.1</name>
    <name evidence="9" type="ORF">OsJ_17123</name>
</gene>
<dbReference type="EMBL" id="AY037805">
    <property type="protein sequence ID" value="AAK59984.1"/>
    <property type="molecule type" value="mRNA"/>
</dbReference>
<dbReference type="EMBL" id="AY466106">
    <property type="protein sequence ID" value="AAS46022.1"/>
    <property type="molecule type" value="mRNA"/>
</dbReference>
<dbReference type="EMBL" id="AY466107">
    <property type="protein sequence ID" value="AAS46023.1"/>
    <property type="molecule type" value="Genomic_DNA"/>
</dbReference>
<dbReference type="EMBL" id="AC105772">
    <property type="protein sequence ID" value="AAU44024.1"/>
    <property type="molecule type" value="Genomic_DNA"/>
</dbReference>
<dbReference type="EMBL" id="AP008211">
    <property type="protein sequence ID" value="BAF16565.1"/>
    <property type="molecule type" value="Genomic_DNA"/>
</dbReference>
<dbReference type="EMBL" id="AP014961">
    <property type="protein sequence ID" value="BAS92275.1"/>
    <property type="molecule type" value="Genomic_DNA"/>
</dbReference>
<dbReference type="EMBL" id="CM000142">
    <property type="protein sequence ID" value="EEE62334.1"/>
    <property type="molecule type" value="Genomic_DNA"/>
</dbReference>
<dbReference type="EMBL" id="AK069108">
    <property type="protein sequence ID" value="BAG91257.1"/>
    <property type="molecule type" value="mRNA"/>
</dbReference>
<dbReference type="RefSeq" id="XP_015639922.1">
    <property type="nucleotide sequence ID" value="XM_015784436.1"/>
</dbReference>
<dbReference type="RefSeq" id="XP_015639923.1">
    <property type="nucleotide sequence ID" value="XM_015784437.1"/>
</dbReference>
<dbReference type="SMR" id="Q65XF2"/>
<dbReference type="FunCoup" id="Q65XF2">
    <property type="interactions" value="1180"/>
</dbReference>
<dbReference type="STRING" id="39947.Q65XF2"/>
<dbReference type="PaxDb" id="39947-Q65XF2"/>
<dbReference type="EnsemblPlants" id="Os05t0148700-01">
    <property type="protein sequence ID" value="Os05t0148700-01"/>
    <property type="gene ID" value="Os05g0148700"/>
</dbReference>
<dbReference type="Gramene" id="Os05t0148700-01">
    <property type="protein sequence ID" value="Os05t0148700-01"/>
    <property type="gene ID" value="Os05g0148700"/>
</dbReference>
<dbReference type="KEGG" id="dosa:Os05g0148700"/>
<dbReference type="eggNOG" id="ENOG502QPKY">
    <property type="taxonomic scope" value="Eukaryota"/>
</dbReference>
<dbReference type="InParanoid" id="Q65XF2"/>
<dbReference type="OMA" id="DMMVSKV"/>
<dbReference type="OrthoDB" id="2019593at2759"/>
<dbReference type="Proteomes" id="UP000000763">
    <property type="component" value="Chromosome 5"/>
</dbReference>
<dbReference type="Proteomes" id="UP000007752">
    <property type="component" value="Chromosome 5"/>
</dbReference>
<dbReference type="Proteomes" id="UP000059680">
    <property type="component" value="Chromosome 5"/>
</dbReference>
<dbReference type="ExpressionAtlas" id="Q65XF2">
    <property type="expression patterns" value="baseline and differential"/>
</dbReference>
<dbReference type="GO" id="GO:0009507">
    <property type="term" value="C:chloroplast"/>
    <property type="evidence" value="ECO:0000318"/>
    <property type="project" value="GO_Central"/>
</dbReference>
<dbReference type="GO" id="GO:0034599">
    <property type="term" value="P:cellular response to oxidative stress"/>
    <property type="evidence" value="ECO:0000318"/>
    <property type="project" value="GO_Central"/>
</dbReference>
<dbReference type="GO" id="GO:0010150">
    <property type="term" value="P:leaf senescence"/>
    <property type="evidence" value="ECO:0000318"/>
    <property type="project" value="GO_Central"/>
</dbReference>
<dbReference type="InterPro" id="IPR044973">
    <property type="entry name" value="AAF-like"/>
</dbReference>
<dbReference type="InterPro" id="IPR016024">
    <property type="entry name" value="ARM-type_fold"/>
</dbReference>
<dbReference type="InterPro" id="IPR036390">
    <property type="entry name" value="WH_DNA-bd_sf"/>
</dbReference>
<dbReference type="PANTHER" id="PTHR36725">
    <property type="entry name" value="SENESCENCE-ASSOCIATED PROTEIN AAF, CHLOROLPLASTIC"/>
    <property type="match status" value="1"/>
</dbReference>
<dbReference type="PANTHER" id="PTHR36725:SF1">
    <property type="entry name" value="SENESCENCE-ASSOCIATED PROTEIN AAF, CHLOROLPLASTIC"/>
    <property type="match status" value="1"/>
</dbReference>
<dbReference type="SUPFAM" id="SSF48371">
    <property type="entry name" value="ARM repeat"/>
    <property type="match status" value="1"/>
</dbReference>
<dbReference type="SUPFAM" id="SSF46785">
    <property type="entry name" value="Winged helix' DNA-binding domain"/>
    <property type="match status" value="1"/>
</dbReference>
<evidence type="ECO:0000250" key="1">
    <source>
        <dbReference type="UniProtKB" id="Q9AXU3"/>
    </source>
</evidence>
<evidence type="ECO:0000255" key="2"/>
<evidence type="ECO:0000269" key="3">
    <source>
    </source>
</evidence>
<evidence type="ECO:0000303" key="4">
    <source>
    </source>
</evidence>
<evidence type="ECO:0000305" key="5"/>
<evidence type="ECO:0000312" key="6">
    <source>
        <dbReference type="EMBL" id="AAS46022.1"/>
    </source>
</evidence>
<evidence type="ECO:0000312" key="7">
    <source>
        <dbReference type="EMBL" id="AAU44024.1"/>
    </source>
</evidence>
<evidence type="ECO:0000312" key="8">
    <source>
        <dbReference type="EMBL" id="BAF16565.1"/>
    </source>
</evidence>
<evidence type="ECO:0000312" key="9">
    <source>
        <dbReference type="EMBL" id="EEE62334.1"/>
    </source>
</evidence>